<dbReference type="EMBL" id="L07372">
    <property type="protein sequence ID" value="AAA51516.1"/>
    <property type="molecule type" value="Genomic_RNA"/>
</dbReference>
<dbReference type="PDB" id="8VQ8">
    <property type="method" value="X-ray"/>
    <property type="resolution" value="2.01 A"/>
    <property type="chains" value="D=311-325"/>
</dbReference>
<dbReference type="PDBsum" id="8VQ8"/>
<dbReference type="SMR" id="P69296"/>
<dbReference type="GO" id="GO:0019029">
    <property type="term" value="C:helical viral capsid"/>
    <property type="evidence" value="ECO:0007669"/>
    <property type="project" value="UniProtKB-UniRule"/>
</dbReference>
<dbReference type="GO" id="GO:0043657">
    <property type="term" value="C:host cell"/>
    <property type="evidence" value="ECO:0007669"/>
    <property type="project" value="GOC"/>
</dbReference>
<dbReference type="GO" id="GO:0042025">
    <property type="term" value="C:host cell nucleus"/>
    <property type="evidence" value="ECO:0007669"/>
    <property type="project" value="UniProtKB-SubCell"/>
</dbReference>
<dbReference type="GO" id="GO:1990904">
    <property type="term" value="C:ribonucleoprotein complex"/>
    <property type="evidence" value="ECO:0007669"/>
    <property type="project" value="UniProtKB-KW"/>
</dbReference>
<dbReference type="GO" id="GO:0019013">
    <property type="term" value="C:viral nucleocapsid"/>
    <property type="evidence" value="ECO:0007669"/>
    <property type="project" value="UniProtKB-UniRule"/>
</dbReference>
<dbReference type="GO" id="GO:0003723">
    <property type="term" value="F:RNA binding"/>
    <property type="evidence" value="ECO:0007669"/>
    <property type="project" value="UniProtKB-UniRule"/>
</dbReference>
<dbReference type="GO" id="GO:0005198">
    <property type="term" value="F:structural molecule activity"/>
    <property type="evidence" value="ECO:0007669"/>
    <property type="project" value="UniProtKB-UniRule"/>
</dbReference>
<dbReference type="GO" id="GO:0046718">
    <property type="term" value="P:symbiont entry into host cell"/>
    <property type="evidence" value="ECO:0007669"/>
    <property type="project" value="UniProtKB-KW"/>
</dbReference>
<dbReference type="GO" id="GO:0075732">
    <property type="term" value="P:viral penetration into host nucleus"/>
    <property type="evidence" value="ECO:0007669"/>
    <property type="project" value="UniProtKB-UniRule"/>
</dbReference>
<dbReference type="HAMAP" id="MF_04070">
    <property type="entry name" value="INFV_NCAP"/>
    <property type="match status" value="1"/>
</dbReference>
<dbReference type="InterPro" id="IPR002141">
    <property type="entry name" value="Flu_NP"/>
</dbReference>
<dbReference type="Pfam" id="PF00506">
    <property type="entry name" value="Flu_NP"/>
    <property type="match status" value="1"/>
</dbReference>
<dbReference type="SUPFAM" id="SSF161003">
    <property type="entry name" value="flu NP-like"/>
    <property type="match status" value="1"/>
</dbReference>
<proteinExistence type="evidence at protein level"/>
<organism>
    <name type="scientific">Influenza A virus (strain A/Shanghai/16/1989 H3N2)</name>
    <dbReference type="NCBI Taxonomy" id="383567"/>
    <lineage>
        <taxon>Viruses</taxon>
        <taxon>Riboviria</taxon>
        <taxon>Orthornavirae</taxon>
        <taxon>Negarnaviricota</taxon>
        <taxon>Polyploviricotina</taxon>
        <taxon>Insthoviricetes</taxon>
        <taxon>Articulavirales</taxon>
        <taxon>Orthomyxoviridae</taxon>
        <taxon>Alphainfluenzavirus</taxon>
        <taxon>Alphainfluenzavirus influenzae</taxon>
        <taxon>Influenza A virus</taxon>
    </lineage>
</organism>
<keyword id="KW-0002">3D-structure</keyword>
<keyword id="KW-0167">Capsid protein</keyword>
<keyword id="KW-1139">Helical capsid protein</keyword>
<keyword id="KW-1048">Host nucleus</keyword>
<keyword id="KW-0945">Host-virus interaction</keyword>
<keyword id="KW-0687">Ribonucleoprotein</keyword>
<keyword id="KW-0694">RNA-binding</keyword>
<keyword id="KW-0543">Viral nucleoprotein</keyword>
<keyword id="KW-1163">Viral penetration into host nucleus</keyword>
<keyword id="KW-0946">Virion</keyword>
<keyword id="KW-1160">Virus entry into host cell</keyword>
<evidence type="ECO:0000255" key="1">
    <source>
        <dbReference type="HAMAP-Rule" id="MF_04070"/>
    </source>
</evidence>
<evidence type="ECO:0000256" key="2">
    <source>
        <dbReference type="SAM" id="MobiDB-lite"/>
    </source>
</evidence>
<comment type="function">
    <text evidence="1">Encapsidates the negative strand viral RNA, protecting it from nucleases. The encapsidated genomic RNA is termed the ribonucleoprotein (RNP) and serves as template for transcription and replication. The RNP needs to be localized in the host nucleus to start an infectious cycle, but is too large to diffuse through the nuclear pore complex. NP comprises at least 2 nuclear localization signals that are responsible for the active RNP import into the nucleus through cellular importin alpha/beta pathway. Later in the infection, nclear export of RNPs are mediated through viral proteins NEP interacting with M1 which binds nucleoproteins. It is possible that nucleoprotein binds directly host exportin-1/XPO1 and plays an active role in RNPs nuclear export. M1 interaction with RNP seems to hide nucleoprotein's nuclear localization signals. Soon after a virion infects a new cell, M1 dissociates from the RNP under acidification of the virion driven by M2 protein. Dissociation of M1 from RNP unmasks nucleoprotein's nuclear localization signals, targeting the RNP to the nucleus.</text>
</comment>
<comment type="subunit">
    <text evidence="1">Homomultimerizes to form the nucleocapsid. May bind host exportin-1/XPO1. Binds to viral genomic RNA. Protein-RNA contacts are mediated by a combination of electrostatic interactions between positively charged residues and the phosphate backbone and planar interactions between aromatic side chains and bases.</text>
</comment>
<comment type="subcellular location">
    <subcellularLocation>
        <location evidence="1">Virion</location>
    </subcellularLocation>
    <subcellularLocation>
        <location evidence="1">Host nucleus</location>
    </subcellularLocation>
</comment>
<comment type="PTM">
    <text evidence="1">Late in virus-infected cells, may be cleaved from a 56-kDa protein to a 53-kDa protein by a cellular caspase. This cleavage might be a marker for the onset of apoptosis in infected cells or have a specific function in virus host interaction.</text>
</comment>
<comment type="similarity">
    <text evidence="1">Belongs to the influenza viruses nucleoprotein family.</text>
</comment>
<name>NCAP_I89A4</name>
<sequence length="498" mass="56225">MASQGTKRSYEQMETDGERQNATEIRASVGKMIDGIGRFYIQMCTELKLSDYEGRLIQNSLTVERMVLSAFDERRNRYLEEHPSAGKDPKKTGGPIYKRVGGRWMRELVLYDKEEIRRIWRQANNGDDATRGLTHMMIWHSNLNDTTYQRTRALVRTGMDPRMCSLMQGSTLPRRSGAAGAAVKGIGTMVMELIRMIKRGINDRNFWRGENGRKTRSAYERMCNILKGKFQTAAQRAMMDQVRESRNPGNAEIEDLIFSARSALILRGSVAHKSCLPACVYGPAVSSGYDFEKEGYSLVGIDPFKLLQNSQVYSLIRPNENPAHKSQLVWMACHSAAFEDLRLLSFIRGTKVSPRGKLSTRGVQIASNENMDNMESSTLELRSRYWAIRTRSGGNTNQQRASAGQISVQPTFSVQRNLPFEKSTVMAAFTGNTEGRTSDMRAEIIRMMEGAKPEEVSFRGRGVFELSDEKATNPIVPSFDMSNEGSYFFGDNAEEYDN</sequence>
<feature type="chain" id="PRO_0000079096" description="Nucleoprotein">
    <location>
        <begin position="1"/>
        <end position="498"/>
    </location>
</feature>
<feature type="region of interest" description="Disordered" evidence="2">
    <location>
        <begin position="1"/>
        <end position="21"/>
    </location>
</feature>
<feature type="short sequence motif" description="Unconventional nuclear localization signal" evidence="1">
    <location>
        <begin position="1"/>
        <end position="18"/>
    </location>
</feature>
<feature type="short sequence motif" description="Bipartite nuclear localization signal" evidence="1">
    <location>
        <begin position="198"/>
        <end position="216"/>
    </location>
</feature>
<feature type="compositionally biased region" description="Basic and acidic residues" evidence="2">
    <location>
        <begin position="8"/>
        <end position="21"/>
    </location>
</feature>
<protein>
    <recommendedName>
        <fullName evidence="1">Nucleoprotein</fullName>
    </recommendedName>
    <alternativeName>
        <fullName evidence="1">Nucleocapsid protein</fullName>
        <shortName evidence="1">Protein N</shortName>
    </alternativeName>
</protein>
<reference key="1">
    <citation type="journal article" date="1993" name="J. Virol.">
        <title>Analysis of the evolution and variation of the human influenza A virus nucleoprotein gene from 1933 to 1990.</title>
        <authorList>
            <person name="Shu L.L."/>
            <person name="Bean W.J."/>
            <person name="Webster R.G."/>
        </authorList>
    </citation>
    <scope>NUCLEOTIDE SEQUENCE [GENOMIC RNA]</scope>
</reference>
<organismHost>
    <name type="scientific">Aves</name>
    <dbReference type="NCBI Taxonomy" id="8782"/>
</organismHost>
<organismHost>
    <name type="scientific">Cetacea</name>
    <name type="common">whales</name>
    <dbReference type="NCBI Taxonomy" id="9721"/>
</organismHost>
<organismHost>
    <name type="scientific">Homo sapiens</name>
    <name type="common">Human</name>
    <dbReference type="NCBI Taxonomy" id="9606"/>
</organismHost>
<organismHost>
    <name type="scientific">Phocidae</name>
    <name type="common">true seals</name>
    <dbReference type="NCBI Taxonomy" id="9709"/>
</organismHost>
<organismHost>
    <name type="scientific">Sus scrofa</name>
    <name type="common">Pig</name>
    <dbReference type="NCBI Taxonomy" id="9823"/>
</organismHost>
<gene>
    <name evidence="1" type="primary">NP</name>
</gene>
<accession>P69296</accession>
<accession>Q07539</accession>
<accession>Q08029</accession>